<comment type="function">
    <text evidence="1">Component of the spindle pole body (SPB) required for the proper execution of spindle pole body (SPB) duplication. Potential role in cross-linking filaments or anchoring other molecules. It is essential for growth (By similarity).</text>
</comment>
<comment type="subunit">
    <text evidence="1">Homodimer. Component of the SPC110 complex containing at least CMD1, SPC29 and SCP110. Interacts with SPC97 and SPC98.</text>
</comment>
<comment type="subcellular location">
    <subcellularLocation>
        <location evidence="1">Nucleus</location>
    </subcellularLocation>
    <subcellularLocation>
        <location evidence="1">Cytoplasm</location>
        <location evidence="1">Cytoskeleton</location>
        <location evidence="1">Microtubule organizing center</location>
        <location evidence="1">Spindle pole body</location>
    </subcellularLocation>
    <text evidence="1">Tightly associated with the nucleus. It is present in a granular pattern that excludes the nucleolus.</text>
</comment>
<comment type="similarity">
    <text evidence="5">Belongs to the SPC110 family.</text>
</comment>
<name>SP110_YEAS8</name>
<gene>
    <name type="primary">SPC110</name>
    <name type="synonym">NUF1</name>
    <name type="synonym">XCM1</name>
    <name type="ORF">EC1118_1D0_6491g</name>
</gene>
<feature type="chain" id="PRO_0000409205" description="Spindle pole body component 110">
    <location>
        <begin position="1"/>
        <end position="944"/>
    </location>
</feature>
<feature type="region of interest" description="Disordered" evidence="4">
    <location>
        <begin position="23"/>
        <end position="110"/>
    </location>
</feature>
<feature type="region of interest" description="Calmodulin-binding" evidence="1">
    <location>
        <begin position="900"/>
        <end position="927"/>
    </location>
</feature>
<feature type="coiled-coil region" evidence="3">
    <location>
        <begin position="119"/>
        <end position="799"/>
    </location>
</feature>
<feature type="short sequence motif" description="Nuclear localization signal" evidence="3">
    <location>
        <begin position="54"/>
        <end position="59"/>
    </location>
</feature>
<feature type="short sequence motif" description="Nuclear localization signal" evidence="3">
    <location>
        <begin position="726"/>
        <end position="731"/>
    </location>
</feature>
<feature type="short sequence motif" description="Nuclear localization signal" evidence="3">
    <location>
        <begin position="742"/>
        <end position="747"/>
    </location>
</feature>
<feature type="compositionally biased region" description="Polar residues" evidence="4">
    <location>
        <begin position="28"/>
        <end position="46"/>
    </location>
</feature>
<feature type="compositionally biased region" description="Polar residues" evidence="4">
    <location>
        <begin position="67"/>
        <end position="78"/>
    </location>
</feature>
<feature type="compositionally biased region" description="Basic and acidic residues" evidence="4">
    <location>
        <begin position="96"/>
        <end position="110"/>
    </location>
</feature>
<feature type="modified residue" description="Phosphothreonine" evidence="2">
    <location>
        <position position="18"/>
    </location>
</feature>
<feature type="modified residue" description="Phosphoserine; by MPS1" evidence="2">
    <location>
        <position position="60"/>
    </location>
</feature>
<feature type="modified residue" description="Phosphothreonine; by MPS1" evidence="2">
    <location>
        <position position="64"/>
    </location>
</feature>
<feature type="modified residue" description="Phosphothreonine; by MPS1" evidence="2">
    <location>
        <position position="68"/>
    </location>
</feature>
<feature type="modified residue" description="Phosphoserine" evidence="2">
    <location>
        <position position="80"/>
    </location>
</feature>
<feature type="modified residue" description="Phosphoserine" evidence="2">
    <location>
        <position position="529"/>
    </location>
</feature>
<evidence type="ECO:0000250" key="1"/>
<evidence type="ECO:0000250" key="2">
    <source>
        <dbReference type="UniProtKB" id="P32380"/>
    </source>
</evidence>
<evidence type="ECO:0000255" key="3"/>
<evidence type="ECO:0000256" key="4">
    <source>
        <dbReference type="SAM" id="MobiDB-lite"/>
    </source>
</evidence>
<evidence type="ECO:0000305" key="5"/>
<sequence length="944" mass="111769">MDEASHLPNGSLKNMEFTPVGFIKSKRNTTQTQVVSPTKVPNANNGDENEGPVKKRQRRSIDDTIDSTRLFSEASQFDDSFPEIKANIPPSPRSGNVDKSRKRNLIDDLKKDVPMSQPLKEQEVREHQMKKERFDRALESKLLGKRHITYANSDISNKELYINEIKSLKHEIKELRKEKNDTLNNYDTLEEETDDLKNRLQALEKELDAKNKIVNSRKVDDHSGCIEEREQMERKLAELERKLKTVKDQVLELENNSDVQSLKLRSKEDELKNLMNELNELKSNAEEKDTQLEFKKNELRKRTIELNELKIKSDEMDLQLKQKQNESKRLKDELNELETKFSENGSQSSAKENELKMLKNKIAELEEEISTKNSQLIAKEGKLASLMAQLTQLESKLNQRDSQLGSREEELKKTNDKLQKDIRIAREETVSKDERITDLQKKVKQLENDLFVIKKTHSESKTITDNELESKDKLIKILENDLKVAQEKYSKMEKELKEREFNYKISESKLEDEKTTLNEKISNLAAENSQLKNKIEDNSTATHHMKENYEKQLESLRKDIEEYKESAKDSEDKIEELKIRIAENSAKVSEKRSKDIKQKDEQISDLTQNLKLQEDEISSLKSIIDRYKKDFNQLKSEQSNIQHDLNLQILNLENKLIESEDELKSLRDSQKIEIENWKRKYNNLSLENDRLLTEKESASDKEREISILNRKLDEMDKEKWNLQESKEKYKRELQKVITANDRLRREKEELNENSNNIRIMEDKMTRIKKNYLSEITSLQEENRRLEERLILNERRKDNDSTMQLNDIISYYKLKYHSEVRHNNDLKVINDYLNKVLALGTRRLRLDTRKGEHSLNISLPDDDELDRDYYNSHVYTRYHDYEYPLRFNLNRRGPYFERRLSFKTVALLVLACVRMKRIAFYRRSDDNRLRILRDRIESSSGRISW</sequence>
<organism>
    <name type="scientific">Saccharomyces cerevisiae (strain Lalvin EC1118 / Prise de mousse)</name>
    <name type="common">Baker's yeast</name>
    <dbReference type="NCBI Taxonomy" id="643680"/>
    <lineage>
        <taxon>Eukaryota</taxon>
        <taxon>Fungi</taxon>
        <taxon>Dikarya</taxon>
        <taxon>Ascomycota</taxon>
        <taxon>Saccharomycotina</taxon>
        <taxon>Saccharomycetes</taxon>
        <taxon>Saccharomycetales</taxon>
        <taxon>Saccharomycetaceae</taxon>
        <taxon>Saccharomyces</taxon>
    </lineage>
</organism>
<proteinExistence type="inferred from homology"/>
<accession>C8Z5R8</accession>
<protein>
    <recommendedName>
        <fullName>Spindle pole body component 110</fullName>
    </recommendedName>
    <alternativeName>
        <fullName>Extragenic suppressor of CMD1-1 mutant protein 1</fullName>
    </alternativeName>
    <alternativeName>
        <fullName>Nuclear filament-related protein 1</fullName>
    </alternativeName>
    <alternativeName>
        <fullName>Spindle pole body spacer protein SPC110</fullName>
    </alternativeName>
</protein>
<keyword id="KW-0175">Coiled coil</keyword>
<keyword id="KW-0963">Cytoplasm</keyword>
<keyword id="KW-0206">Cytoskeleton</keyword>
<keyword id="KW-0539">Nucleus</keyword>
<keyword id="KW-0597">Phosphoprotein</keyword>
<reference key="1">
    <citation type="journal article" date="2009" name="Proc. Natl. Acad. Sci. U.S.A.">
        <title>Eukaryote-to-eukaryote gene transfer events revealed by the genome sequence of the wine yeast Saccharomyces cerevisiae EC1118.</title>
        <authorList>
            <person name="Novo M."/>
            <person name="Bigey F."/>
            <person name="Beyne E."/>
            <person name="Galeote V."/>
            <person name="Gavory F."/>
            <person name="Mallet S."/>
            <person name="Cambon B."/>
            <person name="Legras J.-L."/>
            <person name="Wincker P."/>
            <person name="Casaregola S."/>
            <person name="Dequin S."/>
        </authorList>
    </citation>
    <scope>NUCLEOTIDE SEQUENCE [LARGE SCALE GENOMIC DNA]</scope>
    <source>
        <strain>Lalvin EC1118 / Prise de mousse</strain>
    </source>
</reference>
<dbReference type="EMBL" id="FN393063">
    <property type="protein sequence ID" value="CAY78857.1"/>
    <property type="molecule type" value="Genomic_DNA"/>
</dbReference>
<dbReference type="SMR" id="C8Z5R8"/>
<dbReference type="TopDownProteomics" id="C8Z5R8"/>
<dbReference type="HOGENOM" id="CLU_329279_0_0_1"/>
<dbReference type="OrthoDB" id="39528at4893"/>
<dbReference type="Proteomes" id="UP000000286">
    <property type="component" value="Chromosome IV, Scaffold EC1118_1D0"/>
</dbReference>
<dbReference type="GO" id="GO:0005737">
    <property type="term" value="C:cytoplasm"/>
    <property type="evidence" value="ECO:0007669"/>
    <property type="project" value="UniProtKB-KW"/>
</dbReference>
<dbReference type="GO" id="GO:0005634">
    <property type="term" value="C:nucleus"/>
    <property type="evidence" value="ECO:0007669"/>
    <property type="project" value="UniProtKB-SubCell"/>
</dbReference>
<dbReference type="GO" id="GO:0005816">
    <property type="term" value="C:spindle pole body"/>
    <property type="evidence" value="ECO:0007669"/>
    <property type="project" value="UniProtKB-SubCell"/>
</dbReference>
<dbReference type="Gene3D" id="1.10.287.1490">
    <property type="match status" value="1"/>
</dbReference>
<dbReference type="Gene3D" id="6.10.310.10">
    <property type="match status" value="1"/>
</dbReference>
<dbReference type="InterPro" id="IPR040593">
    <property type="entry name" value="Spc110_C"/>
</dbReference>
<dbReference type="PANTHER" id="PTHR43941">
    <property type="entry name" value="STRUCTURAL MAINTENANCE OF CHROMOSOMES PROTEIN 2"/>
    <property type="match status" value="1"/>
</dbReference>
<dbReference type="PANTHER" id="PTHR43941:SF1">
    <property type="entry name" value="STRUCTURAL MAINTENANCE OF CHROMOSOMES PROTEIN 2"/>
    <property type="match status" value="1"/>
</dbReference>
<dbReference type="Pfam" id="PF18520">
    <property type="entry name" value="Spc110_C"/>
    <property type="match status" value="1"/>
</dbReference>
<dbReference type="SUPFAM" id="SSF57997">
    <property type="entry name" value="Tropomyosin"/>
    <property type="match status" value="1"/>
</dbReference>